<reference key="1">
    <citation type="submission" date="2009-03" db="EMBL/GenBank/DDBJ databases">
        <title>Brucella melitensis ATCC 23457 whole genome shotgun sequencing project.</title>
        <authorList>
            <person name="Setubal J.C."/>
            <person name="Boyle S."/>
            <person name="Crasta O.R."/>
            <person name="Gillespie J.J."/>
            <person name="Kenyon R.W."/>
            <person name="Lu J."/>
            <person name="Mane S."/>
            <person name="Nagrani S."/>
            <person name="Shallom J.M."/>
            <person name="Shallom S."/>
            <person name="Shukla M."/>
            <person name="Snyder E.E."/>
            <person name="Sobral B.W."/>
            <person name="Wattam A.R."/>
            <person name="Will R."/>
            <person name="Williams K."/>
            <person name="Yoo H."/>
            <person name="Munk C."/>
            <person name="Tapia R."/>
            <person name="Han C."/>
            <person name="Detter J.C."/>
            <person name="Bruce D."/>
            <person name="Brettin T.S."/>
        </authorList>
    </citation>
    <scope>NUCLEOTIDE SEQUENCE [LARGE SCALE GENOMIC DNA]</scope>
    <source>
        <strain>ATCC 23457</strain>
    </source>
</reference>
<name>RS6_BRUMB</name>
<proteinExistence type="inferred from homology"/>
<gene>
    <name evidence="1" type="primary">rpsF</name>
    <name type="ordered locus">BMEA_A0490</name>
</gene>
<sequence>MALYEHVLLARQDISQQQVDALVEQFKGVLEANGGKFGKVENWGLRPLTYRIKKNRKAYYTLVNIDAPAAAVAEMERQMRINEDVLRFLTVRVEEHEEGQSAMLTRRDDRRERDGDDRPRRREGGFDRGDRGDRGPRRPRDNEAGEGA</sequence>
<organism>
    <name type="scientific">Brucella melitensis biotype 2 (strain ATCC 23457)</name>
    <dbReference type="NCBI Taxonomy" id="546272"/>
    <lineage>
        <taxon>Bacteria</taxon>
        <taxon>Pseudomonadati</taxon>
        <taxon>Pseudomonadota</taxon>
        <taxon>Alphaproteobacteria</taxon>
        <taxon>Hyphomicrobiales</taxon>
        <taxon>Brucellaceae</taxon>
        <taxon>Brucella/Ochrobactrum group</taxon>
        <taxon>Brucella</taxon>
    </lineage>
</organism>
<feature type="chain" id="PRO_1000133513" description="Small ribosomal subunit protein bS6">
    <location>
        <begin position="1"/>
        <end position="148"/>
    </location>
</feature>
<feature type="region of interest" description="Disordered" evidence="2">
    <location>
        <begin position="96"/>
        <end position="148"/>
    </location>
</feature>
<evidence type="ECO:0000255" key="1">
    <source>
        <dbReference type="HAMAP-Rule" id="MF_00360"/>
    </source>
</evidence>
<evidence type="ECO:0000256" key="2">
    <source>
        <dbReference type="SAM" id="MobiDB-lite"/>
    </source>
</evidence>
<evidence type="ECO:0000305" key="3"/>
<keyword id="KW-0687">Ribonucleoprotein</keyword>
<keyword id="KW-0689">Ribosomal protein</keyword>
<keyword id="KW-0694">RNA-binding</keyword>
<keyword id="KW-0699">rRNA-binding</keyword>
<protein>
    <recommendedName>
        <fullName evidence="1">Small ribosomal subunit protein bS6</fullName>
    </recommendedName>
    <alternativeName>
        <fullName evidence="3">30S ribosomal protein S6</fullName>
    </alternativeName>
</protein>
<accession>C0RHG2</accession>
<dbReference type="EMBL" id="CP001488">
    <property type="protein sequence ID" value="ACO00270.1"/>
    <property type="molecule type" value="Genomic_DNA"/>
</dbReference>
<dbReference type="RefSeq" id="WP_002963611.1">
    <property type="nucleotide sequence ID" value="NC_012441.1"/>
</dbReference>
<dbReference type="SMR" id="C0RHG2"/>
<dbReference type="GeneID" id="97534175"/>
<dbReference type="KEGG" id="bmi:BMEA_A0490"/>
<dbReference type="HOGENOM" id="CLU_113441_2_0_5"/>
<dbReference type="Proteomes" id="UP000001748">
    <property type="component" value="Chromosome I"/>
</dbReference>
<dbReference type="GO" id="GO:0022627">
    <property type="term" value="C:cytosolic small ribosomal subunit"/>
    <property type="evidence" value="ECO:0007669"/>
    <property type="project" value="TreeGrafter"/>
</dbReference>
<dbReference type="GO" id="GO:0070181">
    <property type="term" value="F:small ribosomal subunit rRNA binding"/>
    <property type="evidence" value="ECO:0007669"/>
    <property type="project" value="TreeGrafter"/>
</dbReference>
<dbReference type="GO" id="GO:0003735">
    <property type="term" value="F:structural constituent of ribosome"/>
    <property type="evidence" value="ECO:0007669"/>
    <property type="project" value="InterPro"/>
</dbReference>
<dbReference type="GO" id="GO:0006412">
    <property type="term" value="P:translation"/>
    <property type="evidence" value="ECO:0007669"/>
    <property type="project" value="UniProtKB-UniRule"/>
</dbReference>
<dbReference type="CDD" id="cd00473">
    <property type="entry name" value="bS6"/>
    <property type="match status" value="1"/>
</dbReference>
<dbReference type="Gene3D" id="3.30.70.60">
    <property type="match status" value="1"/>
</dbReference>
<dbReference type="HAMAP" id="MF_00360">
    <property type="entry name" value="Ribosomal_bS6"/>
    <property type="match status" value="1"/>
</dbReference>
<dbReference type="InterPro" id="IPR000529">
    <property type="entry name" value="Ribosomal_bS6"/>
</dbReference>
<dbReference type="InterPro" id="IPR035980">
    <property type="entry name" value="Ribosomal_bS6_sf"/>
</dbReference>
<dbReference type="InterPro" id="IPR020814">
    <property type="entry name" value="Ribosomal_S6_plastid/chlpt"/>
</dbReference>
<dbReference type="InterPro" id="IPR014717">
    <property type="entry name" value="Transl_elong_EF1B/ribsomal_bS6"/>
</dbReference>
<dbReference type="NCBIfam" id="TIGR00166">
    <property type="entry name" value="S6"/>
    <property type="match status" value="1"/>
</dbReference>
<dbReference type="PANTHER" id="PTHR21011">
    <property type="entry name" value="MITOCHONDRIAL 28S RIBOSOMAL PROTEIN S6"/>
    <property type="match status" value="1"/>
</dbReference>
<dbReference type="PANTHER" id="PTHR21011:SF1">
    <property type="entry name" value="SMALL RIBOSOMAL SUBUNIT PROTEIN BS6M"/>
    <property type="match status" value="1"/>
</dbReference>
<dbReference type="Pfam" id="PF01250">
    <property type="entry name" value="Ribosomal_S6"/>
    <property type="match status" value="1"/>
</dbReference>
<dbReference type="SUPFAM" id="SSF54995">
    <property type="entry name" value="Ribosomal protein S6"/>
    <property type="match status" value="1"/>
</dbReference>
<comment type="function">
    <text evidence="1">Binds together with bS18 to 16S ribosomal RNA.</text>
</comment>
<comment type="similarity">
    <text evidence="1">Belongs to the bacterial ribosomal protein bS6 family.</text>
</comment>